<evidence type="ECO:0000255" key="1">
    <source>
        <dbReference type="HAMAP-Rule" id="MF_01389"/>
    </source>
</evidence>
<name>UREG_BURM9</name>
<accession>A2S993</accession>
<proteinExistence type="inferred from homology"/>
<protein>
    <recommendedName>
        <fullName evidence="1">Urease accessory protein UreG</fullName>
    </recommendedName>
</protein>
<organism>
    <name type="scientific">Burkholderia mallei (strain NCTC 10229)</name>
    <dbReference type="NCBI Taxonomy" id="412022"/>
    <lineage>
        <taxon>Bacteria</taxon>
        <taxon>Pseudomonadati</taxon>
        <taxon>Pseudomonadota</taxon>
        <taxon>Betaproteobacteria</taxon>
        <taxon>Burkholderiales</taxon>
        <taxon>Burkholderiaceae</taxon>
        <taxon>Burkholderia</taxon>
        <taxon>pseudomallei group</taxon>
    </lineage>
</organism>
<reference key="1">
    <citation type="journal article" date="2010" name="Genome Biol. Evol.">
        <title>Continuing evolution of Burkholderia mallei through genome reduction and large-scale rearrangements.</title>
        <authorList>
            <person name="Losada L."/>
            <person name="Ronning C.M."/>
            <person name="DeShazer D."/>
            <person name="Woods D."/>
            <person name="Fedorova N."/>
            <person name="Kim H.S."/>
            <person name="Shabalina S.A."/>
            <person name="Pearson T.R."/>
            <person name="Brinkac L."/>
            <person name="Tan P."/>
            <person name="Nandi T."/>
            <person name="Crabtree J."/>
            <person name="Badger J."/>
            <person name="Beckstrom-Sternberg S."/>
            <person name="Saqib M."/>
            <person name="Schutzer S.E."/>
            <person name="Keim P."/>
            <person name="Nierman W.C."/>
        </authorList>
    </citation>
    <scope>NUCLEOTIDE SEQUENCE [LARGE SCALE GENOMIC DNA]</scope>
    <source>
        <strain>NCTC 10229</strain>
    </source>
</reference>
<comment type="function">
    <text evidence="1">Facilitates the functional incorporation of the urease nickel metallocenter. This process requires GTP hydrolysis, probably effectuated by UreG.</text>
</comment>
<comment type="subunit">
    <text evidence="1">Homodimer. UreD, UreF and UreG form a complex that acts as a GTP-hydrolysis-dependent molecular chaperone, activating the urease apoprotein by helping to assemble the nickel containing metallocenter of UreC. The UreE protein probably delivers the nickel.</text>
</comment>
<comment type="subcellular location">
    <subcellularLocation>
        <location evidence="1">Cytoplasm</location>
    </subcellularLocation>
</comment>
<comment type="similarity">
    <text evidence="1">Belongs to the SIMIBI class G3E GTPase family. UreG subfamily.</text>
</comment>
<gene>
    <name evidence="1" type="primary">ureG</name>
    <name type="ordered locus">BMA10229_A2554</name>
</gene>
<feature type="chain" id="PRO_0000347371" description="Urease accessory protein UreG">
    <location>
        <begin position="1"/>
        <end position="216"/>
    </location>
</feature>
<feature type="binding site" evidence="1">
    <location>
        <begin position="25"/>
        <end position="32"/>
    </location>
    <ligand>
        <name>GTP</name>
        <dbReference type="ChEBI" id="CHEBI:37565"/>
    </ligand>
</feature>
<dbReference type="EMBL" id="CP000546">
    <property type="protein sequence ID" value="ABN01496.1"/>
    <property type="molecule type" value="Genomic_DNA"/>
</dbReference>
<dbReference type="RefSeq" id="WP_004185810.1">
    <property type="nucleotide sequence ID" value="NC_008836.1"/>
</dbReference>
<dbReference type="SMR" id="A2S993"/>
<dbReference type="GeneID" id="92979890"/>
<dbReference type="KEGG" id="bml:BMA10229_A2554"/>
<dbReference type="HOGENOM" id="CLU_072144_1_0_4"/>
<dbReference type="Proteomes" id="UP000002283">
    <property type="component" value="Chromosome I"/>
</dbReference>
<dbReference type="GO" id="GO:0005737">
    <property type="term" value="C:cytoplasm"/>
    <property type="evidence" value="ECO:0007669"/>
    <property type="project" value="UniProtKB-SubCell"/>
</dbReference>
<dbReference type="GO" id="GO:0005525">
    <property type="term" value="F:GTP binding"/>
    <property type="evidence" value="ECO:0007669"/>
    <property type="project" value="UniProtKB-KW"/>
</dbReference>
<dbReference type="GO" id="GO:0003924">
    <property type="term" value="F:GTPase activity"/>
    <property type="evidence" value="ECO:0007669"/>
    <property type="project" value="InterPro"/>
</dbReference>
<dbReference type="GO" id="GO:0016151">
    <property type="term" value="F:nickel cation binding"/>
    <property type="evidence" value="ECO:0007669"/>
    <property type="project" value="UniProtKB-UniRule"/>
</dbReference>
<dbReference type="GO" id="GO:0043419">
    <property type="term" value="P:urea catabolic process"/>
    <property type="evidence" value="ECO:0007669"/>
    <property type="project" value="InterPro"/>
</dbReference>
<dbReference type="CDD" id="cd05540">
    <property type="entry name" value="UreG"/>
    <property type="match status" value="1"/>
</dbReference>
<dbReference type="FunFam" id="3.40.50.300:FF:000208">
    <property type="entry name" value="Urease accessory protein UreG"/>
    <property type="match status" value="1"/>
</dbReference>
<dbReference type="Gene3D" id="3.40.50.300">
    <property type="entry name" value="P-loop containing nucleotide triphosphate hydrolases"/>
    <property type="match status" value="1"/>
</dbReference>
<dbReference type="HAMAP" id="MF_01389">
    <property type="entry name" value="UreG"/>
    <property type="match status" value="1"/>
</dbReference>
<dbReference type="InterPro" id="IPR003495">
    <property type="entry name" value="CobW/HypB/UreG_nucleotide-bd"/>
</dbReference>
<dbReference type="InterPro" id="IPR027417">
    <property type="entry name" value="P-loop_NTPase"/>
</dbReference>
<dbReference type="InterPro" id="IPR004400">
    <property type="entry name" value="UreG"/>
</dbReference>
<dbReference type="NCBIfam" id="TIGR00101">
    <property type="entry name" value="ureG"/>
    <property type="match status" value="1"/>
</dbReference>
<dbReference type="PANTHER" id="PTHR31715">
    <property type="entry name" value="UREASE ACCESSORY PROTEIN G"/>
    <property type="match status" value="1"/>
</dbReference>
<dbReference type="PANTHER" id="PTHR31715:SF0">
    <property type="entry name" value="UREASE ACCESSORY PROTEIN G"/>
    <property type="match status" value="1"/>
</dbReference>
<dbReference type="Pfam" id="PF02492">
    <property type="entry name" value="cobW"/>
    <property type="match status" value="1"/>
</dbReference>
<dbReference type="PIRSF" id="PIRSF005624">
    <property type="entry name" value="Ni-bind_GTPase"/>
    <property type="match status" value="1"/>
</dbReference>
<dbReference type="SUPFAM" id="SSF52540">
    <property type="entry name" value="P-loop containing nucleoside triphosphate hydrolases"/>
    <property type="match status" value="1"/>
</dbReference>
<keyword id="KW-0143">Chaperone</keyword>
<keyword id="KW-0963">Cytoplasm</keyword>
<keyword id="KW-0342">GTP-binding</keyword>
<keyword id="KW-0996">Nickel insertion</keyword>
<keyword id="KW-0547">Nucleotide-binding</keyword>
<sequence length="216" mass="23193">MNAPRFAAPARRTKKLPPLRVGIGGPVGSGKTTLLEMLCKGMRERYDLVAITNDIYTKEDQRLLTIAGALPEARIMGVETGGCPHTAIREDASINLEAVERMLARFPDADIVFIESGGDNLAATFSPELSDLTIYVIDVAGGEKIPRKGGPGITKSDLLVINKTDLAPLVGANLEVMASDTRKMRGERPYVMCNLKALDGVADVIAFIENKGLLTV</sequence>